<sequence length="146" mass="16688">MNIMPVSESLMADWLGLRKLLWPDHDEAHLQEMQRLLQQTQSLQLLAYSDTQQAIAMLEASIRYEYVNGTQTSPVAFLEGIYVLPDYRRSGIATHLVQQVEAWAKPFGCIEFASDAALDNRISHAMHQALGFHETERVVYFKKHIG</sequence>
<dbReference type="EC" id="2.3.1.82" evidence="5"/>
<dbReference type="EMBL" id="L29045">
    <property type="protein sequence ID" value="AAC41392.1"/>
    <property type="molecule type" value="Genomic_DNA"/>
</dbReference>
<dbReference type="RefSeq" id="WP_016651650.1">
    <property type="nucleotide sequence ID" value="NG_047301.1"/>
</dbReference>
<dbReference type="SMR" id="Q44245"/>
<dbReference type="CARD" id="ARO:3002557">
    <property type="molecule name" value="AAC(6')-Ij"/>
    <property type="mechanism identifier" value="ARO:0001004"/>
    <property type="mechanism name" value="antibiotic inactivation"/>
</dbReference>
<dbReference type="GeneID" id="45418978"/>
<dbReference type="KEGG" id="ag:AAC41392"/>
<dbReference type="GO" id="GO:0047663">
    <property type="term" value="F:aminoglycoside 6'-N-acetyltransferase activity"/>
    <property type="evidence" value="ECO:0000314"/>
    <property type="project" value="UniProtKB"/>
</dbReference>
<dbReference type="GO" id="GO:0046677">
    <property type="term" value="P:response to antibiotic"/>
    <property type="evidence" value="ECO:0000314"/>
    <property type="project" value="UniProtKB"/>
</dbReference>
<dbReference type="CDD" id="cd04301">
    <property type="entry name" value="NAT_SF"/>
    <property type="match status" value="1"/>
</dbReference>
<dbReference type="FunFam" id="3.40.630.30:FF:000071">
    <property type="entry name" value="Acetyltransf_1"/>
    <property type="match status" value="1"/>
</dbReference>
<dbReference type="Gene3D" id="3.40.630.30">
    <property type="match status" value="1"/>
</dbReference>
<dbReference type="InterPro" id="IPR016181">
    <property type="entry name" value="Acyl_CoA_acyltransferase"/>
</dbReference>
<dbReference type="InterPro" id="IPR024170">
    <property type="entry name" value="Aminoglycoside_N6-AcTrfrase"/>
</dbReference>
<dbReference type="InterPro" id="IPR000182">
    <property type="entry name" value="GNAT_dom"/>
</dbReference>
<dbReference type="NCBIfam" id="NF000224">
    <property type="entry name" value="AAC_6p_Acine"/>
    <property type="match status" value="1"/>
</dbReference>
<dbReference type="NCBIfam" id="NF043067">
    <property type="entry name" value="AAC_6p_group_E"/>
    <property type="match status" value="1"/>
</dbReference>
<dbReference type="Pfam" id="PF00583">
    <property type="entry name" value="Acetyltransf_1"/>
    <property type="match status" value="1"/>
</dbReference>
<dbReference type="PIRSF" id="PIRSF000452">
    <property type="entry name" value="6-N-acetyltransf"/>
    <property type="match status" value="1"/>
</dbReference>
<dbReference type="SUPFAM" id="SSF55729">
    <property type="entry name" value="Acyl-CoA N-acyltransferases (Nat)"/>
    <property type="match status" value="1"/>
</dbReference>
<dbReference type="PROSITE" id="PS51186">
    <property type="entry name" value="GNAT"/>
    <property type="match status" value="1"/>
</dbReference>
<comment type="function">
    <text evidence="5">Catalyzes the transfer of an acetyl group from acetyl-CoA to the 6'-amino group of aminoglycoside molecules conferring resistance to antibiotics containing the purpurosamine ring including amikacin, kanamycin, tobramycin and netilmicin.</text>
</comment>
<comment type="catalytic activity">
    <reaction evidence="5">
        <text>kanamycin B + acetyl-CoA = N(6')-acetylkanamycin B + CoA + H(+)</text>
        <dbReference type="Rhea" id="RHEA:16449"/>
        <dbReference type="ChEBI" id="CHEBI:15378"/>
        <dbReference type="ChEBI" id="CHEBI:57287"/>
        <dbReference type="ChEBI" id="CHEBI:57288"/>
        <dbReference type="ChEBI" id="CHEBI:58390"/>
        <dbReference type="ChEBI" id="CHEBI:58549"/>
        <dbReference type="EC" id="2.3.1.82"/>
    </reaction>
</comment>
<comment type="subunit">
    <text evidence="1">Homodimer.</text>
</comment>
<feature type="chain" id="PRO_0000416836" description="Aminoglycoside N(6')-acetyltransferase type 1">
    <location>
        <begin position="1"/>
        <end position="146"/>
    </location>
</feature>
<feature type="domain" description="N-acetyltransferase" evidence="4">
    <location>
        <begin position="1"/>
        <end position="146"/>
    </location>
</feature>
<feature type="binding site" evidence="3">
    <location>
        <position position="22"/>
    </location>
    <ligand>
        <name>substrate</name>
    </ligand>
</feature>
<feature type="binding site" evidence="3">
    <location>
        <position position="25"/>
    </location>
    <ligand>
        <name>substrate</name>
    </ligand>
</feature>
<feature type="binding site" evidence="3">
    <location>
        <position position="66"/>
    </location>
    <ligand>
        <name>substrate</name>
    </ligand>
</feature>
<feature type="binding site" evidence="3">
    <location>
        <position position="79"/>
    </location>
    <ligand>
        <name>substrate</name>
    </ligand>
</feature>
<feature type="binding site" evidence="3">
    <location>
        <begin position="81"/>
        <end position="83"/>
    </location>
    <ligand>
        <name>acetyl-CoA</name>
        <dbReference type="ChEBI" id="CHEBI:57288"/>
    </ligand>
</feature>
<feature type="binding site" evidence="3">
    <location>
        <position position="115"/>
    </location>
    <ligand>
        <name>substrate</name>
    </ligand>
</feature>
<feature type="binding site" evidence="3">
    <location>
        <position position="120"/>
    </location>
    <ligand>
        <name>acetyl-CoA</name>
        <dbReference type="ChEBI" id="CHEBI:57288"/>
    </ligand>
</feature>
<feature type="binding site" evidence="3">
    <location>
        <position position="136"/>
    </location>
    <ligand>
        <name>substrate</name>
    </ligand>
</feature>
<reference evidence="7 8" key="1">
    <citation type="journal article" date="1994" name="Antimicrob. Agents Chemother.">
        <title>Characterization of the chromosomal aac(6')-Ij gene of Acinetobacter sp. 13 and the aac(6')-Ih plasmid gene of Acinetobacter baumannii.</title>
        <authorList>
            <person name="Lambert T."/>
            <person name="Gerbaud G."/>
            <person name="Courvalin P."/>
        </authorList>
    </citation>
    <scope>NUCLEOTIDE SEQUENCE [GENOMIC DNA]</scope>
    <scope>FUNCTION</scope>
    <scope>CATALYTIC ACTIVITY</scope>
    <scope>SUBSTRATE SPECIFICITY</scope>
    <source>
        <strain evidence="8">BM2689</strain>
    </source>
</reference>
<proteinExistence type="evidence at protein level"/>
<organism>
    <name type="scientific">Acinetobacter genomosp. 13</name>
    <dbReference type="NCBI Taxonomy" id="72607"/>
    <lineage>
        <taxon>Bacteria</taxon>
        <taxon>Pseudomonadati</taxon>
        <taxon>Pseudomonadota</taxon>
        <taxon>Gammaproteobacteria</taxon>
        <taxon>Moraxellales</taxon>
        <taxon>Moraxellaceae</taxon>
        <taxon>Acinetobacter</taxon>
        <taxon>Acinetobacter calcoaceticus/baumannii complex</taxon>
    </lineage>
</organism>
<keyword id="KW-0012">Acyltransferase</keyword>
<keyword id="KW-0046">Antibiotic resistance</keyword>
<keyword id="KW-0808">Transferase</keyword>
<accession>Q44245</accession>
<evidence type="ECO:0000250" key="1"/>
<evidence type="ECO:0000250" key="2">
    <source>
        <dbReference type="UniProtKB" id="P50858"/>
    </source>
</evidence>
<evidence type="ECO:0000250" key="3">
    <source>
        <dbReference type="UniProtKB" id="Q9R381"/>
    </source>
</evidence>
<evidence type="ECO:0000255" key="4">
    <source>
        <dbReference type="PROSITE-ProRule" id="PRU00532"/>
    </source>
</evidence>
<evidence type="ECO:0000269" key="5">
    <source>
    </source>
</evidence>
<evidence type="ECO:0000303" key="6">
    <source>
    </source>
</evidence>
<evidence type="ECO:0000305" key="7"/>
<evidence type="ECO:0000312" key="8">
    <source>
        <dbReference type="EMBL" id="AAC41392.1"/>
    </source>
</evidence>
<protein>
    <recommendedName>
        <fullName evidence="6">Aminoglycoside N(6')-acetyltransferase type 1</fullName>
        <ecNumber evidence="5">2.3.1.82</ecNumber>
    </recommendedName>
    <alternativeName>
        <fullName evidence="8">AAC(6')-Ij</fullName>
    </alternativeName>
    <alternativeName>
        <fullName evidence="2">Aminoglycoside resistance protein</fullName>
    </alternativeName>
</protein>
<name>AAC6_ACIG1</name>